<gene>
    <name type="ordered locus">SPJ_0248</name>
</gene>
<dbReference type="EMBL" id="CP000919">
    <property type="protein sequence ID" value="ACO20138.1"/>
    <property type="molecule type" value="Genomic_DNA"/>
</dbReference>
<dbReference type="RefSeq" id="WP_000354904.1">
    <property type="nucleotide sequence ID" value="NC_012466.1"/>
</dbReference>
<dbReference type="SMR" id="C1CC35"/>
<dbReference type="KEGG" id="sjj:SPJ_0248"/>
<dbReference type="HOGENOM" id="CLU_048704_0_0_9"/>
<dbReference type="Proteomes" id="UP000002206">
    <property type="component" value="Chromosome"/>
</dbReference>
<dbReference type="CDD" id="cd08025">
    <property type="entry name" value="RNR_PFL_like_DUF711"/>
    <property type="match status" value="1"/>
</dbReference>
<dbReference type="Gene3D" id="3.20.70.20">
    <property type="match status" value="1"/>
</dbReference>
<dbReference type="HAMAP" id="MF_01221">
    <property type="entry name" value="UPF0210"/>
    <property type="match status" value="1"/>
</dbReference>
<dbReference type="InterPro" id="IPR007841">
    <property type="entry name" value="UPF0210"/>
</dbReference>
<dbReference type="NCBIfam" id="NF003700">
    <property type="entry name" value="PRK05313.1"/>
    <property type="match status" value="1"/>
</dbReference>
<dbReference type="PANTHER" id="PTHR37560:SF1">
    <property type="entry name" value="UPF0210 PROTEIN MJ1665"/>
    <property type="match status" value="1"/>
</dbReference>
<dbReference type="PANTHER" id="PTHR37560">
    <property type="entry name" value="UPF0210 PROTEIN SPR0218"/>
    <property type="match status" value="1"/>
</dbReference>
<dbReference type="Pfam" id="PF05167">
    <property type="entry name" value="DUF711"/>
    <property type="match status" value="1"/>
</dbReference>
<dbReference type="SUPFAM" id="SSF51998">
    <property type="entry name" value="PFL-like glycyl radical enzymes"/>
    <property type="match status" value="1"/>
</dbReference>
<sequence length="445" mass="46384">MDIRQVTETIAMIEEQNFDIRTITMGISLLDCIDPDINRAAEKIYQKITTKAANLVAVGDEIAAELGIPIVNKRVSVTPISLIGAATDATDYVVLAKALDKAAKEIGVDFIGGFSALVQKGYQKGDEILINSIPRALTETDKVCSSVNIGSTKSGINMTAVADMGRIIKETANLSDMGAAKLVVFANAVEDNPFMAGAFHGVGEADVIINVGVSGPGVVKRALEKVRGQSFDVVAETVKKTAFKITRIGQLVGQMASERLGVEFGIVDLSLAPTPAVGDSVARVLEEMGLETVGTHGTTAALALLNDQVKKGGVMACNQVGGLSGAFIPVSEDEGMIAAVQNGSLNLEKLEAMTAICSVGLDMIAIPEDTPAETIAAMIADEAAIGVINMKTTAVRIIPKGREGDMIEFGGLLGTAPVMKVNGASSVDFISRGGQIPAPIHSFKN</sequence>
<reference key="1">
    <citation type="journal article" date="2010" name="Genome Biol.">
        <title>Structure and dynamics of the pan-genome of Streptococcus pneumoniae and closely related species.</title>
        <authorList>
            <person name="Donati C."/>
            <person name="Hiller N.L."/>
            <person name="Tettelin H."/>
            <person name="Muzzi A."/>
            <person name="Croucher N.J."/>
            <person name="Angiuoli S.V."/>
            <person name="Oggioni M."/>
            <person name="Dunning Hotopp J.C."/>
            <person name="Hu F.Z."/>
            <person name="Riley D.R."/>
            <person name="Covacci A."/>
            <person name="Mitchell T.J."/>
            <person name="Bentley S.D."/>
            <person name="Kilian M."/>
            <person name="Ehrlich G.D."/>
            <person name="Rappuoli R."/>
            <person name="Moxon E.R."/>
            <person name="Masignani V."/>
        </authorList>
    </citation>
    <scope>NUCLEOTIDE SEQUENCE [LARGE SCALE GENOMIC DNA]</scope>
    <source>
        <strain>JJA</strain>
    </source>
</reference>
<feature type="chain" id="PRO_1000164871" description="UPF0210 protein SPJ_0248">
    <location>
        <begin position="1"/>
        <end position="445"/>
    </location>
</feature>
<comment type="subunit">
    <text evidence="1">Homodimer.</text>
</comment>
<comment type="similarity">
    <text evidence="1">Belongs to the UPF0210 family.</text>
</comment>
<accession>C1CC35</accession>
<proteinExistence type="inferred from homology"/>
<protein>
    <recommendedName>
        <fullName evidence="1">UPF0210 protein SPJ_0248</fullName>
    </recommendedName>
</protein>
<evidence type="ECO:0000255" key="1">
    <source>
        <dbReference type="HAMAP-Rule" id="MF_01221"/>
    </source>
</evidence>
<name>Y248_STRZJ</name>
<organism>
    <name type="scientific">Streptococcus pneumoniae (strain JJA)</name>
    <dbReference type="NCBI Taxonomy" id="488222"/>
    <lineage>
        <taxon>Bacteria</taxon>
        <taxon>Bacillati</taxon>
        <taxon>Bacillota</taxon>
        <taxon>Bacilli</taxon>
        <taxon>Lactobacillales</taxon>
        <taxon>Streptococcaceae</taxon>
        <taxon>Streptococcus</taxon>
    </lineage>
</organism>